<sequence length="382" mass="41486">MSLKEKTQSLFANAFGYPATHTIQAPGRVNLIGEHTDYNDGFVLPCAIDYQTVISCAPRDDRKVRVMAADYENQLDEFSLDTPIIAHENYQWANYVRGVVKHLQLRNNSFGGVDMVISGNVPQGAGLSSSASLEVAVGTVLQQLYHLPLDGAQIALNGQEAENQFVGCNCGIMDQLISALGKKDHALLIDCRSLGTKAVSMPKGVAVVIINSNFKRTLVGSEYNTRREQCETGARFFQQPALRDVTIEEFNAVAHELDPIVAKRVRHILTENARTVEAASALEQGDLKRMGELMAESHASMRDDFEITVPQIDTLVEIVKAVIGDKGGVRMTGGGFGGCIVALIPEELVPAVQQAVAEQYEAKTGIKETFYVCKPSQGAGQC</sequence>
<proteinExistence type="inferred from homology"/>
<accession>B7MPP1</accession>
<feature type="chain" id="PRO_1000125379" description="Galactokinase">
    <location>
        <begin position="1"/>
        <end position="382"/>
    </location>
</feature>
<feature type="active site" description="Proton acceptor" evidence="1">
    <location>
        <position position="174"/>
    </location>
</feature>
<feature type="binding site" evidence="1">
    <location>
        <begin position="34"/>
        <end position="37"/>
    </location>
    <ligand>
        <name>substrate</name>
    </ligand>
</feature>
<feature type="binding site" evidence="1">
    <location>
        <begin position="124"/>
        <end position="130"/>
    </location>
    <ligand>
        <name>ATP</name>
        <dbReference type="ChEBI" id="CHEBI:30616"/>
    </ligand>
</feature>
<feature type="binding site" evidence="1">
    <location>
        <position position="130"/>
    </location>
    <ligand>
        <name>Mg(2+)</name>
        <dbReference type="ChEBI" id="CHEBI:18420"/>
    </ligand>
</feature>
<feature type="binding site" evidence="1">
    <location>
        <position position="162"/>
    </location>
    <ligand>
        <name>Mg(2+)</name>
        <dbReference type="ChEBI" id="CHEBI:18420"/>
    </ligand>
</feature>
<feature type="binding site" evidence="1">
    <location>
        <position position="223"/>
    </location>
    <ligand>
        <name>substrate</name>
    </ligand>
</feature>
<feature type="site" description="Transition state stabilizer" evidence="1">
    <location>
        <position position="28"/>
    </location>
</feature>
<reference key="1">
    <citation type="journal article" date="2009" name="PLoS Genet.">
        <title>Organised genome dynamics in the Escherichia coli species results in highly diverse adaptive paths.</title>
        <authorList>
            <person name="Touchon M."/>
            <person name="Hoede C."/>
            <person name="Tenaillon O."/>
            <person name="Barbe V."/>
            <person name="Baeriswyl S."/>
            <person name="Bidet P."/>
            <person name="Bingen E."/>
            <person name="Bonacorsi S."/>
            <person name="Bouchier C."/>
            <person name="Bouvet O."/>
            <person name="Calteau A."/>
            <person name="Chiapello H."/>
            <person name="Clermont O."/>
            <person name="Cruveiller S."/>
            <person name="Danchin A."/>
            <person name="Diard M."/>
            <person name="Dossat C."/>
            <person name="Karoui M.E."/>
            <person name="Frapy E."/>
            <person name="Garry L."/>
            <person name="Ghigo J.M."/>
            <person name="Gilles A.M."/>
            <person name="Johnson J."/>
            <person name="Le Bouguenec C."/>
            <person name="Lescat M."/>
            <person name="Mangenot S."/>
            <person name="Martinez-Jehanne V."/>
            <person name="Matic I."/>
            <person name="Nassif X."/>
            <person name="Oztas S."/>
            <person name="Petit M.A."/>
            <person name="Pichon C."/>
            <person name="Rouy Z."/>
            <person name="Ruf C.S."/>
            <person name="Schneider D."/>
            <person name="Tourret J."/>
            <person name="Vacherie B."/>
            <person name="Vallenet D."/>
            <person name="Medigue C."/>
            <person name="Rocha E.P.C."/>
            <person name="Denamur E."/>
        </authorList>
    </citation>
    <scope>NUCLEOTIDE SEQUENCE [LARGE SCALE GENOMIC DNA]</scope>
    <source>
        <strain>ED1a</strain>
    </source>
</reference>
<evidence type="ECO:0000255" key="1">
    <source>
        <dbReference type="HAMAP-Rule" id="MF_00246"/>
    </source>
</evidence>
<gene>
    <name evidence="1" type="primary">galK</name>
    <name type="ordered locus">ECED1_0718</name>
</gene>
<name>GAL1_ECO81</name>
<dbReference type="EC" id="2.7.1.6" evidence="1"/>
<dbReference type="EMBL" id="CU928162">
    <property type="protein sequence ID" value="CAR06923.1"/>
    <property type="molecule type" value="Genomic_DNA"/>
</dbReference>
<dbReference type="RefSeq" id="WP_000053431.1">
    <property type="nucleotide sequence ID" value="NC_011745.1"/>
</dbReference>
<dbReference type="SMR" id="B7MPP1"/>
<dbReference type="KEGG" id="ecq:ECED1_0718"/>
<dbReference type="HOGENOM" id="CLU_017814_2_1_6"/>
<dbReference type="UniPathway" id="UPA00214"/>
<dbReference type="Proteomes" id="UP000000748">
    <property type="component" value="Chromosome"/>
</dbReference>
<dbReference type="GO" id="GO:0005829">
    <property type="term" value="C:cytosol"/>
    <property type="evidence" value="ECO:0007669"/>
    <property type="project" value="TreeGrafter"/>
</dbReference>
<dbReference type="GO" id="GO:0005524">
    <property type="term" value="F:ATP binding"/>
    <property type="evidence" value="ECO:0007669"/>
    <property type="project" value="UniProtKB-UniRule"/>
</dbReference>
<dbReference type="GO" id="GO:0004335">
    <property type="term" value="F:galactokinase activity"/>
    <property type="evidence" value="ECO:0007669"/>
    <property type="project" value="UniProtKB-UniRule"/>
</dbReference>
<dbReference type="GO" id="GO:0000287">
    <property type="term" value="F:magnesium ion binding"/>
    <property type="evidence" value="ECO:0007669"/>
    <property type="project" value="UniProtKB-UniRule"/>
</dbReference>
<dbReference type="GO" id="GO:0006012">
    <property type="term" value="P:galactose metabolic process"/>
    <property type="evidence" value="ECO:0007669"/>
    <property type="project" value="UniProtKB-UniRule"/>
</dbReference>
<dbReference type="FunFam" id="3.30.230.10:FF:000017">
    <property type="entry name" value="Galactokinase"/>
    <property type="match status" value="1"/>
</dbReference>
<dbReference type="FunFam" id="3.30.70.890:FF:000001">
    <property type="entry name" value="Galactokinase"/>
    <property type="match status" value="1"/>
</dbReference>
<dbReference type="Gene3D" id="3.30.230.10">
    <property type="match status" value="1"/>
</dbReference>
<dbReference type="Gene3D" id="3.30.70.890">
    <property type="entry name" value="GHMP kinase, C-terminal domain"/>
    <property type="match status" value="1"/>
</dbReference>
<dbReference type="HAMAP" id="MF_00246">
    <property type="entry name" value="Galactokinase"/>
    <property type="match status" value="1"/>
</dbReference>
<dbReference type="InterPro" id="IPR000705">
    <property type="entry name" value="Galactokinase"/>
</dbReference>
<dbReference type="InterPro" id="IPR022963">
    <property type="entry name" value="Galactokinase_bac"/>
</dbReference>
<dbReference type="InterPro" id="IPR019741">
    <property type="entry name" value="Galactokinase_CS"/>
</dbReference>
<dbReference type="InterPro" id="IPR019539">
    <property type="entry name" value="GalKase_N"/>
</dbReference>
<dbReference type="InterPro" id="IPR013750">
    <property type="entry name" value="GHMP_kinase_C_dom"/>
</dbReference>
<dbReference type="InterPro" id="IPR036554">
    <property type="entry name" value="GHMP_kinase_C_sf"/>
</dbReference>
<dbReference type="InterPro" id="IPR006204">
    <property type="entry name" value="GHMP_kinase_N_dom"/>
</dbReference>
<dbReference type="InterPro" id="IPR006203">
    <property type="entry name" value="GHMP_knse_ATP-bd_CS"/>
</dbReference>
<dbReference type="InterPro" id="IPR006206">
    <property type="entry name" value="Mevalonate/galactokinase"/>
</dbReference>
<dbReference type="InterPro" id="IPR020568">
    <property type="entry name" value="Ribosomal_Su5_D2-typ_SF"/>
</dbReference>
<dbReference type="InterPro" id="IPR014721">
    <property type="entry name" value="Ribsml_uS5_D2-typ_fold_subgr"/>
</dbReference>
<dbReference type="NCBIfam" id="TIGR00131">
    <property type="entry name" value="gal_kin"/>
    <property type="match status" value="1"/>
</dbReference>
<dbReference type="NCBIfam" id="NF003472">
    <property type="entry name" value="PRK05101.1"/>
    <property type="match status" value="1"/>
</dbReference>
<dbReference type="PANTHER" id="PTHR10457:SF7">
    <property type="entry name" value="GALACTOKINASE-RELATED"/>
    <property type="match status" value="1"/>
</dbReference>
<dbReference type="PANTHER" id="PTHR10457">
    <property type="entry name" value="MEVALONATE KINASE/GALACTOKINASE"/>
    <property type="match status" value="1"/>
</dbReference>
<dbReference type="Pfam" id="PF10509">
    <property type="entry name" value="GalKase_gal_bdg"/>
    <property type="match status" value="1"/>
</dbReference>
<dbReference type="Pfam" id="PF08544">
    <property type="entry name" value="GHMP_kinases_C"/>
    <property type="match status" value="1"/>
</dbReference>
<dbReference type="Pfam" id="PF00288">
    <property type="entry name" value="GHMP_kinases_N"/>
    <property type="match status" value="1"/>
</dbReference>
<dbReference type="PIRSF" id="PIRSF000530">
    <property type="entry name" value="Galactokinase"/>
    <property type="match status" value="1"/>
</dbReference>
<dbReference type="PRINTS" id="PR00473">
    <property type="entry name" value="GALCTOKINASE"/>
</dbReference>
<dbReference type="PRINTS" id="PR00959">
    <property type="entry name" value="MEVGALKINASE"/>
</dbReference>
<dbReference type="SUPFAM" id="SSF55060">
    <property type="entry name" value="GHMP Kinase, C-terminal domain"/>
    <property type="match status" value="1"/>
</dbReference>
<dbReference type="SUPFAM" id="SSF54211">
    <property type="entry name" value="Ribosomal protein S5 domain 2-like"/>
    <property type="match status" value="1"/>
</dbReference>
<dbReference type="PROSITE" id="PS00106">
    <property type="entry name" value="GALACTOKINASE"/>
    <property type="match status" value="1"/>
</dbReference>
<dbReference type="PROSITE" id="PS00627">
    <property type="entry name" value="GHMP_KINASES_ATP"/>
    <property type="match status" value="1"/>
</dbReference>
<comment type="function">
    <text evidence="1">Catalyzes the transfer of the gamma-phosphate of ATP to D-galactose to form alpha-D-galactose-1-phosphate (Gal-1-P).</text>
</comment>
<comment type="catalytic activity">
    <reaction evidence="1">
        <text>alpha-D-galactose + ATP = alpha-D-galactose 1-phosphate + ADP + H(+)</text>
        <dbReference type="Rhea" id="RHEA:13553"/>
        <dbReference type="ChEBI" id="CHEBI:15378"/>
        <dbReference type="ChEBI" id="CHEBI:28061"/>
        <dbReference type="ChEBI" id="CHEBI:30616"/>
        <dbReference type="ChEBI" id="CHEBI:58336"/>
        <dbReference type="ChEBI" id="CHEBI:456216"/>
        <dbReference type="EC" id="2.7.1.6"/>
    </reaction>
</comment>
<comment type="pathway">
    <text evidence="1">Carbohydrate metabolism; galactose metabolism.</text>
</comment>
<comment type="subcellular location">
    <subcellularLocation>
        <location evidence="1">Cytoplasm</location>
    </subcellularLocation>
</comment>
<comment type="similarity">
    <text evidence="1">Belongs to the GHMP kinase family. GalK subfamily.</text>
</comment>
<protein>
    <recommendedName>
        <fullName evidence="1">Galactokinase</fullName>
        <ecNumber evidence="1">2.7.1.6</ecNumber>
    </recommendedName>
    <alternativeName>
        <fullName evidence="1">Galactose kinase</fullName>
    </alternativeName>
</protein>
<keyword id="KW-0067">ATP-binding</keyword>
<keyword id="KW-0119">Carbohydrate metabolism</keyword>
<keyword id="KW-0963">Cytoplasm</keyword>
<keyword id="KW-0299">Galactose metabolism</keyword>
<keyword id="KW-0418">Kinase</keyword>
<keyword id="KW-0460">Magnesium</keyword>
<keyword id="KW-0479">Metal-binding</keyword>
<keyword id="KW-0547">Nucleotide-binding</keyword>
<keyword id="KW-0808">Transferase</keyword>
<organism>
    <name type="scientific">Escherichia coli O81 (strain ED1a)</name>
    <dbReference type="NCBI Taxonomy" id="585397"/>
    <lineage>
        <taxon>Bacteria</taxon>
        <taxon>Pseudomonadati</taxon>
        <taxon>Pseudomonadota</taxon>
        <taxon>Gammaproteobacteria</taxon>
        <taxon>Enterobacterales</taxon>
        <taxon>Enterobacteriaceae</taxon>
        <taxon>Escherichia</taxon>
    </lineage>
</organism>